<gene>
    <name type="ordered locus">OEOE_0163</name>
</gene>
<reference key="1">
    <citation type="journal article" date="2006" name="Proc. Natl. Acad. Sci. U.S.A.">
        <title>Comparative genomics of the lactic acid bacteria.</title>
        <authorList>
            <person name="Makarova K.S."/>
            <person name="Slesarev A."/>
            <person name="Wolf Y.I."/>
            <person name="Sorokin A."/>
            <person name="Mirkin B."/>
            <person name="Koonin E.V."/>
            <person name="Pavlov A."/>
            <person name="Pavlova N."/>
            <person name="Karamychev V."/>
            <person name="Polouchine N."/>
            <person name="Shakhova V."/>
            <person name="Grigoriev I."/>
            <person name="Lou Y."/>
            <person name="Rohksar D."/>
            <person name="Lucas S."/>
            <person name="Huang K."/>
            <person name="Goodstein D.M."/>
            <person name="Hawkins T."/>
            <person name="Plengvidhya V."/>
            <person name="Welker D."/>
            <person name="Hughes J."/>
            <person name="Goh Y."/>
            <person name="Benson A."/>
            <person name="Baldwin K."/>
            <person name="Lee J.-H."/>
            <person name="Diaz-Muniz I."/>
            <person name="Dosti B."/>
            <person name="Smeianov V."/>
            <person name="Wechter W."/>
            <person name="Barabote R."/>
            <person name="Lorca G."/>
            <person name="Altermann E."/>
            <person name="Barrangou R."/>
            <person name="Ganesan B."/>
            <person name="Xie Y."/>
            <person name="Rawsthorne H."/>
            <person name="Tamir D."/>
            <person name="Parker C."/>
            <person name="Breidt F."/>
            <person name="Broadbent J.R."/>
            <person name="Hutkins R."/>
            <person name="O'Sullivan D."/>
            <person name="Steele J."/>
            <person name="Unlu G."/>
            <person name="Saier M.H. Jr."/>
            <person name="Klaenhammer T."/>
            <person name="Richardson P."/>
            <person name="Kozyavkin S."/>
            <person name="Weimer B.C."/>
            <person name="Mills D.A."/>
        </authorList>
    </citation>
    <scope>NUCLEOTIDE SEQUENCE [LARGE SCALE GENOMIC DNA]</scope>
    <source>
        <strain>ATCC BAA-331 / PSU-1</strain>
    </source>
</reference>
<name>FENR_OENOB</name>
<comment type="catalytic activity">
    <reaction evidence="1">
        <text>2 reduced [2Fe-2S]-[ferredoxin] + NADP(+) + H(+) = 2 oxidized [2Fe-2S]-[ferredoxin] + NADPH</text>
        <dbReference type="Rhea" id="RHEA:20125"/>
        <dbReference type="Rhea" id="RHEA-COMP:10000"/>
        <dbReference type="Rhea" id="RHEA-COMP:10001"/>
        <dbReference type="ChEBI" id="CHEBI:15378"/>
        <dbReference type="ChEBI" id="CHEBI:33737"/>
        <dbReference type="ChEBI" id="CHEBI:33738"/>
        <dbReference type="ChEBI" id="CHEBI:57783"/>
        <dbReference type="ChEBI" id="CHEBI:58349"/>
        <dbReference type="EC" id="1.18.1.2"/>
    </reaction>
</comment>
<comment type="cofactor">
    <cofactor evidence="1">
        <name>FAD</name>
        <dbReference type="ChEBI" id="CHEBI:57692"/>
    </cofactor>
    <text evidence="1">Binds 1 FAD per subunit.</text>
</comment>
<comment type="subunit">
    <text evidence="1">Homodimer.</text>
</comment>
<comment type="similarity">
    <text evidence="1">Belongs to the ferredoxin--NADP reductase type 2 family.</text>
</comment>
<accession>Q04HB6</accession>
<dbReference type="EC" id="1.18.1.2" evidence="1"/>
<dbReference type="EMBL" id="CP000411">
    <property type="protein sequence ID" value="ABJ56156.1"/>
    <property type="molecule type" value="Genomic_DNA"/>
</dbReference>
<dbReference type="RefSeq" id="WP_002821253.1">
    <property type="nucleotide sequence ID" value="NC_008528.1"/>
</dbReference>
<dbReference type="SMR" id="Q04HB6"/>
<dbReference type="STRING" id="203123.OEOE_0163"/>
<dbReference type="KEGG" id="ooe:OEOE_0163"/>
<dbReference type="PATRIC" id="fig|203123.7.peg.169"/>
<dbReference type="eggNOG" id="COG0492">
    <property type="taxonomic scope" value="Bacteria"/>
</dbReference>
<dbReference type="HOGENOM" id="CLU_031864_5_5_9"/>
<dbReference type="Proteomes" id="UP000000774">
    <property type="component" value="Chromosome"/>
</dbReference>
<dbReference type="GO" id="GO:0004324">
    <property type="term" value="F:ferredoxin-NADP+ reductase activity"/>
    <property type="evidence" value="ECO:0007669"/>
    <property type="project" value="UniProtKB-UniRule"/>
</dbReference>
<dbReference type="GO" id="GO:0050660">
    <property type="term" value="F:flavin adenine dinucleotide binding"/>
    <property type="evidence" value="ECO:0007669"/>
    <property type="project" value="UniProtKB-UniRule"/>
</dbReference>
<dbReference type="GO" id="GO:0050661">
    <property type="term" value="F:NADP binding"/>
    <property type="evidence" value="ECO:0007669"/>
    <property type="project" value="UniProtKB-UniRule"/>
</dbReference>
<dbReference type="Gene3D" id="3.50.50.60">
    <property type="entry name" value="FAD/NAD(P)-binding domain"/>
    <property type="match status" value="2"/>
</dbReference>
<dbReference type="HAMAP" id="MF_01685">
    <property type="entry name" value="FENR2"/>
    <property type="match status" value="1"/>
</dbReference>
<dbReference type="InterPro" id="IPR036188">
    <property type="entry name" value="FAD/NAD-bd_sf"/>
</dbReference>
<dbReference type="InterPro" id="IPR023753">
    <property type="entry name" value="FAD/NAD-binding_dom"/>
</dbReference>
<dbReference type="InterPro" id="IPR022890">
    <property type="entry name" value="Fd--NADP_Rdtase_type_2"/>
</dbReference>
<dbReference type="InterPro" id="IPR050097">
    <property type="entry name" value="Ferredoxin-NADP_redctase_2"/>
</dbReference>
<dbReference type="PANTHER" id="PTHR48105">
    <property type="entry name" value="THIOREDOXIN REDUCTASE 1-RELATED-RELATED"/>
    <property type="match status" value="1"/>
</dbReference>
<dbReference type="Pfam" id="PF07992">
    <property type="entry name" value="Pyr_redox_2"/>
    <property type="match status" value="1"/>
</dbReference>
<dbReference type="PRINTS" id="PR00368">
    <property type="entry name" value="FADPNR"/>
</dbReference>
<dbReference type="PRINTS" id="PR00469">
    <property type="entry name" value="PNDRDTASEII"/>
</dbReference>
<dbReference type="SUPFAM" id="SSF51905">
    <property type="entry name" value="FAD/NAD(P)-binding domain"/>
    <property type="match status" value="1"/>
</dbReference>
<feature type="chain" id="PRO_0000364890" description="Ferredoxin--NADP reductase">
    <location>
        <begin position="1"/>
        <end position="346"/>
    </location>
</feature>
<feature type="binding site" evidence="1">
    <location>
        <position position="35"/>
    </location>
    <ligand>
        <name>FAD</name>
        <dbReference type="ChEBI" id="CHEBI:57692"/>
    </ligand>
</feature>
<feature type="binding site" evidence="1">
    <location>
        <position position="43"/>
    </location>
    <ligand>
        <name>FAD</name>
        <dbReference type="ChEBI" id="CHEBI:57692"/>
    </ligand>
</feature>
<feature type="binding site" evidence="1">
    <location>
        <position position="48"/>
    </location>
    <ligand>
        <name>FAD</name>
        <dbReference type="ChEBI" id="CHEBI:57692"/>
    </ligand>
</feature>
<feature type="binding site" evidence="1">
    <location>
        <position position="88"/>
    </location>
    <ligand>
        <name>FAD</name>
        <dbReference type="ChEBI" id="CHEBI:57692"/>
    </ligand>
</feature>
<feature type="binding site" evidence="1">
    <location>
        <position position="122"/>
    </location>
    <ligand>
        <name>FAD</name>
        <dbReference type="ChEBI" id="CHEBI:57692"/>
    </ligand>
</feature>
<feature type="binding site" evidence="1">
    <location>
        <position position="287"/>
    </location>
    <ligand>
        <name>FAD</name>
        <dbReference type="ChEBI" id="CHEBI:57692"/>
    </ligand>
</feature>
<feature type="binding site" evidence="1">
    <location>
        <position position="327"/>
    </location>
    <ligand>
        <name>FAD</name>
        <dbReference type="ChEBI" id="CHEBI:57692"/>
    </ligand>
</feature>
<sequence length="346" mass="37700">MDNEIFDIAIIGAGPAGLFAQFYAGLRELKTALIEATPRIGGQITALYPEKTILDVAGFLGISGRDLVNELKLQTDLVDSKTFLNSEVTNLKKIASHFEIEINHHASFLAKSVIIASGNGSFSPRKIDVPGSSEAEQSGMLTYLLPGLSEVADKDFAVVGGGNTAVDYAVELIDHDCHVSLIHRRDNFRAMESSVTKLKNSRRTNFLTPMKITGLSPKKEKLEIELQSVPDGAVKRVSVDRLIGGFGFTASSRTINQWEEFPEQFNQGFLTNEAQMTSIAGIFAIGDASIYPGKSDLIATAFGEAPTAINQAVNYFDPDRGGPQHSTSLNKKEVFKHDRIKSRYNS</sequence>
<organism>
    <name type="scientific">Oenococcus oeni (strain ATCC BAA-331 / PSU-1)</name>
    <dbReference type="NCBI Taxonomy" id="203123"/>
    <lineage>
        <taxon>Bacteria</taxon>
        <taxon>Bacillati</taxon>
        <taxon>Bacillota</taxon>
        <taxon>Bacilli</taxon>
        <taxon>Lactobacillales</taxon>
        <taxon>Lactobacillaceae</taxon>
        <taxon>Oenococcus</taxon>
    </lineage>
</organism>
<evidence type="ECO:0000255" key="1">
    <source>
        <dbReference type="HAMAP-Rule" id="MF_01685"/>
    </source>
</evidence>
<proteinExistence type="inferred from homology"/>
<keyword id="KW-0274">FAD</keyword>
<keyword id="KW-0285">Flavoprotein</keyword>
<keyword id="KW-0521">NADP</keyword>
<keyword id="KW-0560">Oxidoreductase</keyword>
<keyword id="KW-1185">Reference proteome</keyword>
<protein>
    <recommendedName>
        <fullName evidence="1">Ferredoxin--NADP reductase</fullName>
        <shortName evidence="1">FNR</shortName>
        <shortName evidence="1">Fd-NADP(+) reductase</shortName>
        <ecNumber evidence="1">1.18.1.2</ecNumber>
    </recommendedName>
</protein>